<keyword id="KW-0548">Nucleotidyltransferase</keyword>
<keyword id="KW-0694">RNA-binding</keyword>
<keyword id="KW-0698">rRNA processing</keyword>
<keyword id="KW-0808">Transferase</keyword>
<keyword id="KW-0819">tRNA processing</keyword>
<keyword id="KW-0820">tRNA-binding</keyword>
<feature type="chain" id="PRO_1000061135" description="Ribonuclease PH">
    <location>
        <begin position="1"/>
        <end position="238"/>
    </location>
</feature>
<feature type="binding site" evidence="1">
    <location>
        <position position="86"/>
    </location>
    <ligand>
        <name>phosphate</name>
        <dbReference type="ChEBI" id="CHEBI:43474"/>
        <note>substrate</note>
    </ligand>
</feature>
<feature type="binding site" evidence="1">
    <location>
        <begin position="124"/>
        <end position="126"/>
    </location>
    <ligand>
        <name>phosphate</name>
        <dbReference type="ChEBI" id="CHEBI:43474"/>
        <note>substrate</note>
    </ligand>
</feature>
<gene>
    <name evidence="1" type="primary">rph</name>
    <name type="ordered locus">Ent638_0096</name>
</gene>
<reference key="1">
    <citation type="journal article" date="2010" name="PLoS Genet.">
        <title>Genome sequence of the plant growth promoting endophytic bacterium Enterobacter sp. 638.</title>
        <authorList>
            <person name="Taghavi S."/>
            <person name="van der Lelie D."/>
            <person name="Hoffman A."/>
            <person name="Zhang Y.B."/>
            <person name="Walla M.D."/>
            <person name="Vangronsveld J."/>
            <person name="Newman L."/>
            <person name="Monchy S."/>
        </authorList>
    </citation>
    <scope>NUCLEOTIDE SEQUENCE [LARGE SCALE GENOMIC DNA]</scope>
    <source>
        <strain>638</strain>
    </source>
</reference>
<proteinExistence type="inferred from homology"/>
<dbReference type="EC" id="2.7.7.56" evidence="1"/>
<dbReference type="EMBL" id="CP000653">
    <property type="protein sequence ID" value="ABP58786.1"/>
    <property type="molecule type" value="Genomic_DNA"/>
</dbReference>
<dbReference type="RefSeq" id="WP_011915364.1">
    <property type="nucleotide sequence ID" value="NC_009436.1"/>
</dbReference>
<dbReference type="SMR" id="A4W506"/>
<dbReference type="STRING" id="399742.Ent638_0096"/>
<dbReference type="KEGG" id="ent:Ent638_0096"/>
<dbReference type="eggNOG" id="COG0689">
    <property type="taxonomic scope" value="Bacteria"/>
</dbReference>
<dbReference type="HOGENOM" id="CLU_050858_0_0_6"/>
<dbReference type="OrthoDB" id="9802265at2"/>
<dbReference type="Proteomes" id="UP000000230">
    <property type="component" value="Chromosome"/>
</dbReference>
<dbReference type="GO" id="GO:0000175">
    <property type="term" value="F:3'-5'-RNA exonuclease activity"/>
    <property type="evidence" value="ECO:0007669"/>
    <property type="project" value="UniProtKB-UniRule"/>
</dbReference>
<dbReference type="GO" id="GO:0000049">
    <property type="term" value="F:tRNA binding"/>
    <property type="evidence" value="ECO:0007669"/>
    <property type="project" value="UniProtKB-UniRule"/>
</dbReference>
<dbReference type="GO" id="GO:0009022">
    <property type="term" value="F:tRNA nucleotidyltransferase activity"/>
    <property type="evidence" value="ECO:0007669"/>
    <property type="project" value="UniProtKB-UniRule"/>
</dbReference>
<dbReference type="GO" id="GO:0016075">
    <property type="term" value="P:rRNA catabolic process"/>
    <property type="evidence" value="ECO:0007669"/>
    <property type="project" value="UniProtKB-UniRule"/>
</dbReference>
<dbReference type="GO" id="GO:0006364">
    <property type="term" value="P:rRNA processing"/>
    <property type="evidence" value="ECO:0007669"/>
    <property type="project" value="UniProtKB-KW"/>
</dbReference>
<dbReference type="GO" id="GO:0008033">
    <property type="term" value="P:tRNA processing"/>
    <property type="evidence" value="ECO:0007669"/>
    <property type="project" value="UniProtKB-UniRule"/>
</dbReference>
<dbReference type="CDD" id="cd11362">
    <property type="entry name" value="RNase_PH_bact"/>
    <property type="match status" value="1"/>
</dbReference>
<dbReference type="FunFam" id="3.30.230.70:FF:000003">
    <property type="entry name" value="Ribonuclease PH"/>
    <property type="match status" value="1"/>
</dbReference>
<dbReference type="Gene3D" id="3.30.230.70">
    <property type="entry name" value="GHMP Kinase, N-terminal domain"/>
    <property type="match status" value="1"/>
</dbReference>
<dbReference type="HAMAP" id="MF_00564">
    <property type="entry name" value="RNase_PH"/>
    <property type="match status" value="1"/>
</dbReference>
<dbReference type="InterPro" id="IPR001247">
    <property type="entry name" value="ExoRNase_PH_dom1"/>
</dbReference>
<dbReference type="InterPro" id="IPR015847">
    <property type="entry name" value="ExoRNase_PH_dom2"/>
</dbReference>
<dbReference type="InterPro" id="IPR036345">
    <property type="entry name" value="ExoRNase_PH_dom2_sf"/>
</dbReference>
<dbReference type="InterPro" id="IPR027408">
    <property type="entry name" value="PNPase/RNase_PH_dom_sf"/>
</dbReference>
<dbReference type="InterPro" id="IPR020568">
    <property type="entry name" value="Ribosomal_Su5_D2-typ_SF"/>
</dbReference>
<dbReference type="InterPro" id="IPR050080">
    <property type="entry name" value="RNase_PH"/>
</dbReference>
<dbReference type="InterPro" id="IPR002381">
    <property type="entry name" value="RNase_PH_bac-type"/>
</dbReference>
<dbReference type="InterPro" id="IPR018336">
    <property type="entry name" value="RNase_PH_CS"/>
</dbReference>
<dbReference type="NCBIfam" id="TIGR01966">
    <property type="entry name" value="RNasePH"/>
    <property type="match status" value="1"/>
</dbReference>
<dbReference type="PANTHER" id="PTHR11953">
    <property type="entry name" value="EXOSOME COMPLEX COMPONENT"/>
    <property type="match status" value="1"/>
</dbReference>
<dbReference type="PANTHER" id="PTHR11953:SF0">
    <property type="entry name" value="EXOSOME COMPLEX COMPONENT RRP41"/>
    <property type="match status" value="1"/>
</dbReference>
<dbReference type="Pfam" id="PF01138">
    <property type="entry name" value="RNase_PH"/>
    <property type="match status" value="1"/>
</dbReference>
<dbReference type="Pfam" id="PF03725">
    <property type="entry name" value="RNase_PH_C"/>
    <property type="match status" value="1"/>
</dbReference>
<dbReference type="SUPFAM" id="SSF55666">
    <property type="entry name" value="Ribonuclease PH domain 2-like"/>
    <property type="match status" value="1"/>
</dbReference>
<dbReference type="SUPFAM" id="SSF54211">
    <property type="entry name" value="Ribosomal protein S5 domain 2-like"/>
    <property type="match status" value="1"/>
</dbReference>
<dbReference type="PROSITE" id="PS01277">
    <property type="entry name" value="RIBONUCLEASE_PH"/>
    <property type="match status" value="1"/>
</dbReference>
<sequence length="238" mass="25294">MRPSGRSANQVRPVTLTRNYTKHAEGSVLVAFGDTKVLCTASIEEGVPRFLKGQGQGWITAEYGMLPRATHTRNAREAAKGKQGGRTMEIQRLIARALRAAVDLKVLGEFTITLDCDVIQADGGTRTASITGACVALADALNKLIAAGKLKKNPMKGMVAAVSVGIVNGEALCDLEYVEDSVAETDMNVVMTEDGRIIEVQGTAEGEPFTHEELLTLLALARGGIESIVTTQKAALQN</sequence>
<name>RNPH_ENT38</name>
<comment type="function">
    <text evidence="1">Phosphorolytic 3'-5' exoribonuclease that plays an important role in tRNA 3'-end maturation. Removes nucleotide residues following the 3'-CCA terminus of tRNAs; can also add nucleotides to the ends of RNA molecules by using nucleoside diphosphates as substrates, but this may not be physiologically important. Probably plays a role in initiation of 16S rRNA degradation (leading to ribosome degradation) during starvation.</text>
</comment>
<comment type="catalytic activity">
    <reaction evidence="1">
        <text>tRNA(n+1) + phosphate = tRNA(n) + a ribonucleoside 5'-diphosphate</text>
        <dbReference type="Rhea" id="RHEA:10628"/>
        <dbReference type="Rhea" id="RHEA-COMP:17343"/>
        <dbReference type="Rhea" id="RHEA-COMP:17344"/>
        <dbReference type="ChEBI" id="CHEBI:43474"/>
        <dbReference type="ChEBI" id="CHEBI:57930"/>
        <dbReference type="ChEBI" id="CHEBI:173114"/>
        <dbReference type="EC" id="2.7.7.56"/>
    </reaction>
</comment>
<comment type="subunit">
    <text evidence="1">Homohexameric ring arranged as a trimer of dimers.</text>
</comment>
<comment type="similarity">
    <text evidence="1">Belongs to the RNase PH family.</text>
</comment>
<evidence type="ECO:0000255" key="1">
    <source>
        <dbReference type="HAMAP-Rule" id="MF_00564"/>
    </source>
</evidence>
<organism>
    <name type="scientific">Enterobacter sp. (strain 638)</name>
    <dbReference type="NCBI Taxonomy" id="399742"/>
    <lineage>
        <taxon>Bacteria</taxon>
        <taxon>Pseudomonadati</taxon>
        <taxon>Pseudomonadota</taxon>
        <taxon>Gammaproteobacteria</taxon>
        <taxon>Enterobacterales</taxon>
        <taxon>Enterobacteriaceae</taxon>
        <taxon>Enterobacter</taxon>
    </lineage>
</organism>
<accession>A4W506</accession>
<protein>
    <recommendedName>
        <fullName evidence="1">Ribonuclease PH</fullName>
        <shortName evidence="1">RNase PH</shortName>
        <ecNumber evidence="1">2.7.7.56</ecNumber>
    </recommendedName>
    <alternativeName>
        <fullName evidence="1">tRNA nucleotidyltransferase</fullName>
    </alternativeName>
</protein>